<name>SYW_COREF</name>
<proteinExistence type="inferred from homology"/>
<sequence length="346" mass="37888">MTSQDNDHTAQTPARVLSGIQPTADSYHLGNYLGAVKQWIDLQNSYDAFYFIPDLHAITVDQNPEELRARTVSGAAQLLALGIDPERSTLFVQSHIPAHAELSWVLTCLTGFGEASRMTQFKDKSTKQGAERTSAGLFTYPMLMAADILLYRPQLVPVGEDQRQHLELTRTLAERFNNRFGTVFEVPEGFIPEGASKIYDLQNPTAKMSKSGENPKGLINLLDDPKVSSKRIKSAVTDNDGVIAFDVANKPGVSNLLVIQSALTGESVDKLVAGYEGKGYGALKTDTADALEAFTTPLRAKYDEYMSDRAELERVLAIGAERAGEIATKVLAEVYDKIGFLAPRSR</sequence>
<accession>Q8FRR3</accession>
<organism>
    <name type="scientific">Corynebacterium efficiens (strain DSM 44549 / YS-314 / AJ 12310 / JCM 11189 / NBRC 100395)</name>
    <dbReference type="NCBI Taxonomy" id="196164"/>
    <lineage>
        <taxon>Bacteria</taxon>
        <taxon>Bacillati</taxon>
        <taxon>Actinomycetota</taxon>
        <taxon>Actinomycetes</taxon>
        <taxon>Mycobacteriales</taxon>
        <taxon>Corynebacteriaceae</taxon>
        <taxon>Corynebacterium</taxon>
    </lineage>
</organism>
<evidence type="ECO:0000255" key="1">
    <source>
        <dbReference type="HAMAP-Rule" id="MF_00140"/>
    </source>
</evidence>
<keyword id="KW-0030">Aminoacyl-tRNA synthetase</keyword>
<keyword id="KW-0067">ATP-binding</keyword>
<keyword id="KW-0963">Cytoplasm</keyword>
<keyword id="KW-0436">Ligase</keyword>
<keyword id="KW-0547">Nucleotide-binding</keyword>
<keyword id="KW-0648">Protein biosynthesis</keyword>
<keyword id="KW-1185">Reference proteome</keyword>
<reference key="1">
    <citation type="journal article" date="2003" name="Genome Res.">
        <title>Comparative complete genome sequence analysis of the amino acid replacements responsible for the thermostability of Corynebacterium efficiens.</title>
        <authorList>
            <person name="Nishio Y."/>
            <person name="Nakamura Y."/>
            <person name="Kawarabayasi Y."/>
            <person name="Usuda Y."/>
            <person name="Kimura E."/>
            <person name="Sugimoto S."/>
            <person name="Matsui K."/>
            <person name="Yamagishi A."/>
            <person name="Kikuchi H."/>
            <person name="Ikeo K."/>
            <person name="Gojobori T."/>
        </authorList>
    </citation>
    <scope>NUCLEOTIDE SEQUENCE [LARGE SCALE GENOMIC DNA]</scope>
    <source>
        <strain>DSM 44549 / YS-314 / AJ 12310 / JCM 11189 / NBRC 100395</strain>
    </source>
</reference>
<feature type="chain" id="PRO_0000136625" description="Tryptophan--tRNA ligase">
    <location>
        <begin position="1"/>
        <end position="346"/>
    </location>
</feature>
<feature type="short sequence motif" description="'HIGH' region" evidence="1">
    <location>
        <begin position="22"/>
        <end position="31"/>
    </location>
</feature>
<feature type="short sequence motif" description="'KMSKS' region" evidence="1">
    <location>
        <begin position="207"/>
        <end position="211"/>
    </location>
</feature>
<feature type="binding site" evidence="1">
    <location>
        <begin position="21"/>
        <end position="23"/>
    </location>
    <ligand>
        <name>ATP</name>
        <dbReference type="ChEBI" id="CHEBI:30616"/>
    </ligand>
</feature>
<feature type="binding site" evidence="1">
    <location>
        <begin position="30"/>
        <end position="31"/>
    </location>
    <ligand>
        <name>ATP</name>
        <dbReference type="ChEBI" id="CHEBI:30616"/>
    </ligand>
</feature>
<feature type="binding site" evidence="1">
    <location>
        <position position="147"/>
    </location>
    <ligand>
        <name>L-tryptophan</name>
        <dbReference type="ChEBI" id="CHEBI:57912"/>
    </ligand>
</feature>
<feature type="binding site" evidence="1">
    <location>
        <begin position="159"/>
        <end position="161"/>
    </location>
    <ligand>
        <name>ATP</name>
        <dbReference type="ChEBI" id="CHEBI:30616"/>
    </ligand>
</feature>
<feature type="binding site" evidence="1">
    <location>
        <position position="198"/>
    </location>
    <ligand>
        <name>ATP</name>
        <dbReference type="ChEBI" id="CHEBI:30616"/>
    </ligand>
</feature>
<feature type="binding site" evidence="1">
    <location>
        <begin position="207"/>
        <end position="211"/>
    </location>
    <ligand>
        <name>ATP</name>
        <dbReference type="ChEBI" id="CHEBI:30616"/>
    </ligand>
</feature>
<gene>
    <name evidence="1" type="primary">trpS</name>
    <name type="ordered locus">CE0696</name>
</gene>
<comment type="function">
    <text evidence="1">Catalyzes the attachment of tryptophan to tRNA(Trp).</text>
</comment>
<comment type="catalytic activity">
    <reaction evidence="1">
        <text>tRNA(Trp) + L-tryptophan + ATP = L-tryptophyl-tRNA(Trp) + AMP + diphosphate + H(+)</text>
        <dbReference type="Rhea" id="RHEA:24080"/>
        <dbReference type="Rhea" id="RHEA-COMP:9671"/>
        <dbReference type="Rhea" id="RHEA-COMP:9705"/>
        <dbReference type="ChEBI" id="CHEBI:15378"/>
        <dbReference type="ChEBI" id="CHEBI:30616"/>
        <dbReference type="ChEBI" id="CHEBI:33019"/>
        <dbReference type="ChEBI" id="CHEBI:57912"/>
        <dbReference type="ChEBI" id="CHEBI:78442"/>
        <dbReference type="ChEBI" id="CHEBI:78535"/>
        <dbReference type="ChEBI" id="CHEBI:456215"/>
        <dbReference type="EC" id="6.1.1.2"/>
    </reaction>
</comment>
<comment type="subunit">
    <text evidence="1">Homodimer.</text>
</comment>
<comment type="subcellular location">
    <subcellularLocation>
        <location evidence="1">Cytoplasm</location>
    </subcellularLocation>
</comment>
<comment type="similarity">
    <text evidence="1">Belongs to the class-I aminoacyl-tRNA synthetase family.</text>
</comment>
<protein>
    <recommendedName>
        <fullName evidence="1">Tryptophan--tRNA ligase</fullName>
        <ecNumber evidence="1">6.1.1.2</ecNumber>
    </recommendedName>
    <alternativeName>
        <fullName evidence="1">Tryptophanyl-tRNA synthetase</fullName>
        <shortName evidence="1">TrpRS</shortName>
    </alternativeName>
</protein>
<dbReference type="EC" id="6.1.1.2" evidence="1"/>
<dbReference type="EMBL" id="BA000035">
    <property type="protein sequence ID" value="BAC17506.1"/>
    <property type="molecule type" value="Genomic_DNA"/>
</dbReference>
<dbReference type="RefSeq" id="WP_006769625.1">
    <property type="nucleotide sequence ID" value="NC_004369.1"/>
</dbReference>
<dbReference type="SMR" id="Q8FRR3"/>
<dbReference type="STRING" id="196164.gene:10741098"/>
<dbReference type="KEGG" id="cef:CE0696"/>
<dbReference type="eggNOG" id="COG0180">
    <property type="taxonomic scope" value="Bacteria"/>
</dbReference>
<dbReference type="HOGENOM" id="CLU_029244_1_1_11"/>
<dbReference type="OrthoDB" id="9801042at2"/>
<dbReference type="Proteomes" id="UP000001409">
    <property type="component" value="Chromosome"/>
</dbReference>
<dbReference type="GO" id="GO:0005829">
    <property type="term" value="C:cytosol"/>
    <property type="evidence" value="ECO:0007669"/>
    <property type="project" value="TreeGrafter"/>
</dbReference>
<dbReference type="GO" id="GO:0005524">
    <property type="term" value="F:ATP binding"/>
    <property type="evidence" value="ECO:0007669"/>
    <property type="project" value="UniProtKB-UniRule"/>
</dbReference>
<dbReference type="GO" id="GO:0004830">
    <property type="term" value="F:tryptophan-tRNA ligase activity"/>
    <property type="evidence" value="ECO:0007669"/>
    <property type="project" value="UniProtKB-UniRule"/>
</dbReference>
<dbReference type="GO" id="GO:0006436">
    <property type="term" value="P:tryptophanyl-tRNA aminoacylation"/>
    <property type="evidence" value="ECO:0007669"/>
    <property type="project" value="UniProtKB-UniRule"/>
</dbReference>
<dbReference type="CDD" id="cd00806">
    <property type="entry name" value="TrpRS_core"/>
    <property type="match status" value="1"/>
</dbReference>
<dbReference type="FunFam" id="1.10.240.10:FF:000002">
    <property type="entry name" value="Tryptophan--tRNA ligase"/>
    <property type="match status" value="1"/>
</dbReference>
<dbReference type="Gene3D" id="3.40.50.620">
    <property type="entry name" value="HUPs"/>
    <property type="match status" value="1"/>
</dbReference>
<dbReference type="Gene3D" id="1.10.240.10">
    <property type="entry name" value="Tyrosyl-Transfer RNA Synthetase"/>
    <property type="match status" value="1"/>
</dbReference>
<dbReference type="HAMAP" id="MF_00140_B">
    <property type="entry name" value="Trp_tRNA_synth_B"/>
    <property type="match status" value="1"/>
</dbReference>
<dbReference type="InterPro" id="IPR002305">
    <property type="entry name" value="aa-tRNA-synth_Ic"/>
</dbReference>
<dbReference type="InterPro" id="IPR014729">
    <property type="entry name" value="Rossmann-like_a/b/a_fold"/>
</dbReference>
<dbReference type="InterPro" id="IPR002306">
    <property type="entry name" value="Trp-tRNA-ligase"/>
</dbReference>
<dbReference type="InterPro" id="IPR024109">
    <property type="entry name" value="Trp-tRNA-ligase_bac-type"/>
</dbReference>
<dbReference type="InterPro" id="IPR050203">
    <property type="entry name" value="Trp-tRNA_synthetase"/>
</dbReference>
<dbReference type="NCBIfam" id="TIGR00233">
    <property type="entry name" value="trpS"/>
    <property type="match status" value="1"/>
</dbReference>
<dbReference type="PANTHER" id="PTHR43766">
    <property type="entry name" value="TRYPTOPHAN--TRNA LIGASE, MITOCHONDRIAL"/>
    <property type="match status" value="1"/>
</dbReference>
<dbReference type="PANTHER" id="PTHR43766:SF1">
    <property type="entry name" value="TRYPTOPHAN--TRNA LIGASE, MITOCHONDRIAL"/>
    <property type="match status" value="1"/>
</dbReference>
<dbReference type="Pfam" id="PF00579">
    <property type="entry name" value="tRNA-synt_1b"/>
    <property type="match status" value="1"/>
</dbReference>
<dbReference type="PRINTS" id="PR01039">
    <property type="entry name" value="TRNASYNTHTRP"/>
</dbReference>
<dbReference type="SUPFAM" id="SSF52374">
    <property type="entry name" value="Nucleotidylyl transferase"/>
    <property type="match status" value="1"/>
</dbReference>